<keyword id="KW-0963">Cytoplasm</keyword>
<keyword id="KW-0489">Methyltransferase</keyword>
<keyword id="KW-1185">Reference proteome</keyword>
<keyword id="KW-0949">S-adenosyl-L-methionine</keyword>
<keyword id="KW-0808">Transferase</keyword>
<dbReference type="EC" id="2.1.1.144" evidence="1"/>
<dbReference type="EMBL" id="CP000250">
    <property type="protein sequence ID" value="ABD06630.1"/>
    <property type="molecule type" value="Genomic_DNA"/>
</dbReference>
<dbReference type="RefSeq" id="WP_011440818.1">
    <property type="nucleotide sequence ID" value="NC_007778.1"/>
</dbReference>
<dbReference type="SMR" id="Q2IYT0"/>
<dbReference type="STRING" id="316058.RPB_1922"/>
<dbReference type="KEGG" id="rpb:RPB_1922"/>
<dbReference type="eggNOG" id="COG4106">
    <property type="taxonomic scope" value="Bacteria"/>
</dbReference>
<dbReference type="HOGENOM" id="CLU_037990_5_2_5"/>
<dbReference type="OrthoDB" id="9795085at2"/>
<dbReference type="Proteomes" id="UP000008809">
    <property type="component" value="Chromosome"/>
</dbReference>
<dbReference type="GO" id="GO:0005737">
    <property type="term" value="C:cytoplasm"/>
    <property type="evidence" value="ECO:0007669"/>
    <property type="project" value="UniProtKB-SubCell"/>
</dbReference>
<dbReference type="GO" id="GO:0030798">
    <property type="term" value="F:trans-aconitate 2-methyltransferase activity"/>
    <property type="evidence" value="ECO:0007669"/>
    <property type="project" value="UniProtKB-UniRule"/>
</dbReference>
<dbReference type="GO" id="GO:0032259">
    <property type="term" value="P:methylation"/>
    <property type="evidence" value="ECO:0007669"/>
    <property type="project" value="UniProtKB-KW"/>
</dbReference>
<dbReference type="CDD" id="cd02440">
    <property type="entry name" value="AdoMet_MTases"/>
    <property type="match status" value="1"/>
</dbReference>
<dbReference type="Gene3D" id="1.10.150.290">
    <property type="entry name" value="S-adenosyl-L-methionine-dependent methyltransferases"/>
    <property type="match status" value="1"/>
</dbReference>
<dbReference type="Gene3D" id="3.40.50.150">
    <property type="entry name" value="Vaccinia Virus protein VP39"/>
    <property type="match status" value="1"/>
</dbReference>
<dbReference type="HAMAP" id="MF_00560">
    <property type="entry name" value="Tran_acon_Me_trans"/>
    <property type="match status" value="1"/>
</dbReference>
<dbReference type="InterPro" id="IPR041698">
    <property type="entry name" value="Methyltransf_25"/>
</dbReference>
<dbReference type="InterPro" id="IPR029063">
    <property type="entry name" value="SAM-dependent_MTases_sf"/>
</dbReference>
<dbReference type="InterPro" id="IPR023506">
    <property type="entry name" value="Trans-aconitate_MeTrfase"/>
</dbReference>
<dbReference type="InterPro" id="IPR023149">
    <property type="entry name" value="Trans_acon_MeTrfase_C"/>
</dbReference>
<dbReference type="NCBIfam" id="NF002463">
    <property type="entry name" value="PRK01683.1"/>
    <property type="match status" value="1"/>
</dbReference>
<dbReference type="PANTHER" id="PTHR43861:SF1">
    <property type="entry name" value="TRANS-ACONITATE 2-METHYLTRANSFERASE"/>
    <property type="match status" value="1"/>
</dbReference>
<dbReference type="PANTHER" id="PTHR43861">
    <property type="entry name" value="TRANS-ACONITATE 2-METHYLTRANSFERASE-RELATED"/>
    <property type="match status" value="1"/>
</dbReference>
<dbReference type="Pfam" id="PF13649">
    <property type="entry name" value="Methyltransf_25"/>
    <property type="match status" value="1"/>
</dbReference>
<dbReference type="SUPFAM" id="SSF53335">
    <property type="entry name" value="S-adenosyl-L-methionine-dependent methyltransferases"/>
    <property type="match status" value="1"/>
</dbReference>
<organism>
    <name type="scientific">Rhodopseudomonas palustris (strain HaA2)</name>
    <dbReference type="NCBI Taxonomy" id="316058"/>
    <lineage>
        <taxon>Bacteria</taxon>
        <taxon>Pseudomonadati</taxon>
        <taxon>Pseudomonadota</taxon>
        <taxon>Alphaproteobacteria</taxon>
        <taxon>Hyphomicrobiales</taxon>
        <taxon>Nitrobacteraceae</taxon>
        <taxon>Rhodopseudomonas</taxon>
    </lineage>
</organism>
<proteinExistence type="inferred from homology"/>
<protein>
    <recommendedName>
        <fullName evidence="1">Trans-aconitate 2-methyltransferase</fullName>
        <ecNumber evidence="1">2.1.1.144</ecNumber>
    </recommendedName>
</protein>
<accession>Q2IYT0</accession>
<gene>
    <name evidence="1" type="primary">tam</name>
    <name type="ordered locus">RPB_1922</name>
</gene>
<name>TAM_RHOP2</name>
<feature type="chain" id="PRO_1000056574" description="Trans-aconitate 2-methyltransferase">
    <location>
        <begin position="1"/>
        <end position="256"/>
    </location>
</feature>
<comment type="function">
    <text evidence="1">Catalyzes the S-adenosylmethionine monomethyl esterification of trans-aconitate.</text>
</comment>
<comment type="catalytic activity">
    <reaction evidence="1">
        <text>trans-aconitate + S-adenosyl-L-methionine = (E)-3-(methoxycarbonyl)pent-2-enedioate + S-adenosyl-L-homocysteine</text>
        <dbReference type="Rhea" id="RHEA:14969"/>
        <dbReference type="ChEBI" id="CHEBI:15708"/>
        <dbReference type="ChEBI" id="CHEBI:57470"/>
        <dbReference type="ChEBI" id="CHEBI:57856"/>
        <dbReference type="ChEBI" id="CHEBI:59789"/>
        <dbReference type="EC" id="2.1.1.144"/>
    </reaction>
</comment>
<comment type="subcellular location">
    <subcellularLocation>
        <location evidence="1">Cytoplasm</location>
    </subcellularLocation>
</comment>
<comment type="similarity">
    <text evidence="1">Belongs to the methyltransferase superfamily. Tam family.</text>
</comment>
<sequence length="256" mass="28782">MADWSAEQYLKFEDERTRPARELLAQIPVVAPGKVADLGCGPGNSTELLVERWPDASVIGVDTSADMLRQARERLPQQKFIEANVAHWAPPPGTEVLFANAVFQWVPDHLKHLKRLITGLDEGGVLAVQMPDNVDEPSHVMMREVAFQEPWRHQLSQAAELRDLLPKPGAYYDALRPLCSRLDIWHTVYNHVLDDAAAIVEWVKGTGLRPFIDPLDLHERKAYLAAYTARVAAAYPPQSDGKVLLRFPRIFIVAIK</sequence>
<evidence type="ECO:0000255" key="1">
    <source>
        <dbReference type="HAMAP-Rule" id="MF_00560"/>
    </source>
</evidence>
<reference key="1">
    <citation type="submission" date="2006-01" db="EMBL/GenBank/DDBJ databases">
        <title>Complete sequence of Rhodopseudomonas palustris HaA2.</title>
        <authorList>
            <consortium name="US DOE Joint Genome Institute"/>
            <person name="Copeland A."/>
            <person name="Lucas S."/>
            <person name="Lapidus A."/>
            <person name="Barry K."/>
            <person name="Detter J.C."/>
            <person name="Glavina T."/>
            <person name="Hammon N."/>
            <person name="Israni S."/>
            <person name="Pitluck S."/>
            <person name="Chain P."/>
            <person name="Malfatti S."/>
            <person name="Shin M."/>
            <person name="Vergez L."/>
            <person name="Schmutz J."/>
            <person name="Larimer F."/>
            <person name="Land M."/>
            <person name="Hauser L."/>
            <person name="Pelletier D.A."/>
            <person name="Kyrpides N."/>
            <person name="Anderson I."/>
            <person name="Oda Y."/>
            <person name="Harwood C.S."/>
            <person name="Richardson P."/>
        </authorList>
    </citation>
    <scope>NUCLEOTIDE SEQUENCE [LARGE SCALE GENOMIC DNA]</scope>
    <source>
        <strain>HaA2</strain>
    </source>
</reference>